<feature type="chain" id="PRO_1000054267" description="Multifunctional CCA protein">
    <location>
        <begin position="1"/>
        <end position="416"/>
    </location>
</feature>
<feature type="domain" description="HD" evidence="1">
    <location>
        <begin position="228"/>
        <end position="335"/>
    </location>
</feature>
<feature type="binding site" evidence="1">
    <location>
        <position position="8"/>
    </location>
    <ligand>
        <name>ATP</name>
        <dbReference type="ChEBI" id="CHEBI:30616"/>
    </ligand>
</feature>
<feature type="binding site" evidence="1">
    <location>
        <position position="8"/>
    </location>
    <ligand>
        <name>CTP</name>
        <dbReference type="ChEBI" id="CHEBI:37563"/>
    </ligand>
</feature>
<feature type="binding site" evidence="1">
    <location>
        <position position="11"/>
    </location>
    <ligand>
        <name>ATP</name>
        <dbReference type="ChEBI" id="CHEBI:30616"/>
    </ligand>
</feature>
<feature type="binding site" evidence="1">
    <location>
        <position position="11"/>
    </location>
    <ligand>
        <name>CTP</name>
        <dbReference type="ChEBI" id="CHEBI:37563"/>
    </ligand>
</feature>
<feature type="binding site" evidence="1">
    <location>
        <position position="21"/>
    </location>
    <ligand>
        <name>Mg(2+)</name>
        <dbReference type="ChEBI" id="CHEBI:18420"/>
    </ligand>
</feature>
<feature type="binding site" evidence="1">
    <location>
        <position position="23"/>
    </location>
    <ligand>
        <name>Mg(2+)</name>
        <dbReference type="ChEBI" id="CHEBI:18420"/>
    </ligand>
</feature>
<feature type="binding site" evidence="1">
    <location>
        <position position="91"/>
    </location>
    <ligand>
        <name>ATP</name>
        <dbReference type="ChEBI" id="CHEBI:30616"/>
    </ligand>
</feature>
<feature type="binding site" evidence="1">
    <location>
        <position position="91"/>
    </location>
    <ligand>
        <name>CTP</name>
        <dbReference type="ChEBI" id="CHEBI:37563"/>
    </ligand>
</feature>
<feature type="binding site" evidence="1">
    <location>
        <position position="137"/>
    </location>
    <ligand>
        <name>ATP</name>
        <dbReference type="ChEBI" id="CHEBI:30616"/>
    </ligand>
</feature>
<feature type="binding site" evidence="1">
    <location>
        <position position="137"/>
    </location>
    <ligand>
        <name>CTP</name>
        <dbReference type="ChEBI" id="CHEBI:37563"/>
    </ligand>
</feature>
<feature type="binding site" evidence="1">
    <location>
        <position position="140"/>
    </location>
    <ligand>
        <name>ATP</name>
        <dbReference type="ChEBI" id="CHEBI:30616"/>
    </ligand>
</feature>
<feature type="binding site" evidence="1">
    <location>
        <position position="140"/>
    </location>
    <ligand>
        <name>CTP</name>
        <dbReference type="ChEBI" id="CHEBI:37563"/>
    </ligand>
</feature>
<gene>
    <name evidence="1" type="primary">cca</name>
    <name type="ordered locus">CGSHiGG_10090</name>
</gene>
<dbReference type="EC" id="2.7.7.72" evidence="1"/>
<dbReference type="EC" id="3.1.3.-" evidence="1"/>
<dbReference type="EC" id="3.1.4.-" evidence="1"/>
<dbReference type="EMBL" id="CP000672">
    <property type="protein sequence ID" value="ABR00779.1"/>
    <property type="molecule type" value="Genomic_DNA"/>
</dbReference>
<dbReference type="SMR" id="A5UJ23"/>
<dbReference type="KEGG" id="hiq:CGSHiGG_10090"/>
<dbReference type="HOGENOM" id="CLU_015961_1_1_6"/>
<dbReference type="Proteomes" id="UP000001990">
    <property type="component" value="Chromosome"/>
</dbReference>
<dbReference type="GO" id="GO:0005524">
    <property type="term" value="F:ATP binding"/>
    <property type="evidence" value="ECO:0007669"/>
    <property type="project" value="UniProtKB-UniRule"/>
</dbReference>
<dbReference type="GO" id="GO:0004810">
    <property type="term" value="F:CCA tRNA nucleotidyltransferase activity"/>
    <property type="evidence" value="ECO:0007669"/>
    <property type="project" value="UniProtKB-UniRule"/>
</dbReference>
<dbReference type="GO" id="GO:0004112">
    <property type="term" value="F:cyclic-nucleotide phosphodiesterase activity"/>
    <property type="evidence" value="ECO:0007669"/>
    <property type="project" value="UniProtKB-UniRule"/>
</dbReference>
<dbReference type="GO" id="GO:0000287">
    <property type="term" value="F:magnesium ion binding"/>
    <property type="evidence" value="ECO:0007669"/>
    <property type="project" value="UniProtKB-UniRule"/>
</dbReference>
<dbReference type="GO" id="GO:0016791">
    <property type="term" value="F:phosphatase activity"/>
    <property type="evidence" value="ECO:0007669"/>
    <property type="project" value="UniProtKB-UniRule"/>
</dbReference>
<dbReference type="GO" id="GO:0000049">
    <property type="term" value="F:tRNA binding"/>
    <property type="evidence" value="ECO:0007669"/>
    <property type="project" value="UniProtKB-UniRule"/>
</dbReference>
<dbReference type="GO" id="GO:0042245">
    <property type="term" value="P:RNA repair"/>
    <property type="evidence" value="ECO:0007669"/>
    <property type="project" value="UniProtKB-KW"/>
</dbReference>
<dbReference type="GO" id="GO:0001680">
    <property type="term" value="P:tRNA 3'-terminal CCA addition"/>
    <property type="evidence" value="ECO:0007669"/>
    <property type="project" value="UniProtKB-UniRule"/>
</dbReference>
<dbReference type="CDD" id="cd00077">
    <property type="entry name" value="HDc"/>
    <property type="match status" value="1"/>
</dbReference>
<dbReference type="CDD" id="cd05398">
    <property type="entry name" value="NT_ClassII-CCAase"/>
    <property type="match status" value="1"/>
</dbReference>
<dbReference type="Gene3D" id="3.30.460.10">
    <property type="entry name" value="Beta Polymerase, domain 2"/>
    <property type="match status" value="1"/>
</dbReference>
<dbReference type="Gene3D" id="1.10.3090.10">
    <property type="entry name" value="cca-adding enzyme, domain 2"/>
    <property type="match status" value="1"/>
</dbReference>
<dbReference type="HAMAP" id="MF_01261">
    <property type="entry name" value="CCA_bact_type1"/>
    <property type="match status" value="1"/>
</dbReference>
<dbReference type="HAMAP" id="MF_01262">
    <property type="entry name" value="CCA_bact_type2"/>
    <property type="match status" value="1"/>
</dbReference>
<dbReference type="InterPro" id="IPR012006">
    <property type="entry name" value="CCA_bact"/>
</dbReference>
<dbReference type="InterPro" id="IPR003607">
    <property type="entry name" value="HD/PDEase_dom"/>
</dbReference>
<dbReference type="InterPro" id="IPR006674">
    <property type="entry name" value="HD_domain"/>
</dbReference>
<dbReference type="InterPro" id="IPR043519">
    <property type="entry name" value="NT_sf"/>
</dbReference>
<dbReference type="InterPro" id="IPR002646">
    <property type="entry name" value="PolA_pol_head_dom"/>
</dbReference>
<dbReference type="InterPro" id="IPR032828">
    <property type="entry name" value="PolyA_RNA-bd"/>
</dbReference>
<dbReference type="InterPro" id="IPR050124">
    <property type="entry name" value="tRNA_CCA-adding_enzyme"/>
</dbReference>
<dbReference type="NCBIfam" id="NF008137">
    <property type="entry name" value="PRK10885.1"/>
    <property type="match status" value="1"/>
</dbReference>
<dbReference type="PANTHER" id="PTHR47545">
    <property type="entry name" value="MULTIFUNCTIONAL CCA PROTEIN"/>
    <property type="match status" value="1"/>
</dbReference>
<dbReference type="PANTHER" id="PTHR47545:SF1">
    <property type="entry name" value="MULTIFUNCTIONAL CCA PROTEIN"/>
    <property type="match status" value="1"/>
</dbReference>
<dbReference type="Pfam" id="PF01966">
    <property type="entry name" value="HD"/>
    <property type="match status" value="1"/>
</dbReference>
<dbReference type="Pfam" id="PF01743">
    <property type="entry name" value="PolyA_pol"/>
    <property type="match status" value="1"/>
</dbReference>
<dbReference type="Pfam" id="PF12627">
    <property type="entry name" value="PolyA_pol_RNAbd"/>
    <property type="match status" value="1"/>
</dbReference>
<dbReference type="PIRSF" id="PIRSF000813">
    <property type="entry name" value="CCA_bact"/>
    <property type="match status" value="1"/>
</dbReference>
<dbReference type="SUPFAM" id="SSF81301">
    <property type="entry name" value="Nucleotidyltransferase"/>
    <property type="match status" value="1"/>
</dbReference>
<dbReference type="SUPFAM" id="SSF81891">
    <property type="entry name" value="Poly A polymerase C-terminal region-like"/>
    <property type="match status" value="1"/>
</dbReference>
<dbReference type="PROSITE" id="PS51831">
    <property type="entry name" value="HD"/>
    <property type="match status" value="1"/>
</dbReference>
<evidence type="ECO:0000255" key="1">
    <source>
        <dbReference type="HAMAP-Rule" id="MF_01261"/>
    </source>
</evidence>
<organism>
    <name type="scientific">Haemophilus influenzae (strain PittGG)</name>
    <dbReference type="NCBI Taxonomy" id="374931"/>
    <lineage>
        <taxon>Bacteria</taxon>
        <taxon>Pseudomonadati</taxon>
        <taxon>Pseudomonadota</taxon>
        <taxon>Gammaproteobacteria</taxon>
        <taxon>Pasteurellales</taxon>
        <taxon>Pasteurellaceae</taxon>
        <taxon>Haemophilus</taxon>
    </lineage>
</organism>
<comment type="function">
    <text evidence="1">Catalyzes the addition and repair of the essential 3'-terminal CCA sequence in tRNAs without using a nucleic acid template. Adds these three nucleotides in the order of C, C, and A to the tRNA nucleotide-73, using CTP and ATP as substrates and producing inorganic pyrophosphate. tRNA 3'-terminal CCA addition is required both for tRNA processing and repair. Also involved in tRNA surveillance by mediating tandem CCA addition to generate a CCACCA at the 3' terminus of unstable tRNAs. While stable tRNAs receive only 3'-terminal CCA, unstable tRNAs are marked with CCACCA and rapidly degraded.</text>
</comment>
<comment type="catalytic activity">
    <reaction evidence="1">
        <text>a tRNA precursor + 2 CTP + ATP = a tRNA with a 3' CCA end + 3 diphosphate</text>
        <dbReference type="Rhea" id="RHEA:14433"/>
        <dbReference type="Rhea" id="RHEA-COMP:10465"/>
        <dbReference type="Rhea" id="RHEA-COMP:10468"/>
        <dbReference type="ChEBI" id="CHEBI:30616"/>
        <dbReference type="ChEBI" id="CHEBI:33019"/>
        <dbReference type="ChEBI" id="CHEBI:37563"/>
        <dbReference type="ChEBI" id="CHEBI:74896"/>
        <dbReference type="ChEBI" id="CHEBI:83071"/>
        <dbReference type="EC" id="2.7.7.72"/>
    </reaction>
</comment>
<comment type="catalytic activity">
    <reaction evidence="1">
        <text>a tRNA with a 3' CCA end + 2 CTP + ATP = a tRNA with a 3' CCACCA end + 3 diphosphate</text>
        <dbReference type="Rhea" id="RHEA:76235"/>
        <dbReference type="Rhea" id="RHEA-COMP:10468"/>
        <dbReference type="Rhea" id="RHEA-COMP:18655"/>
        <dbReference type="ChEBI" id="CHEBI:30616"/>
        <dbReference type="ChEBI" id="CHEBI:33019"/>
        <dbReference type="ChEBI" id="CHEBI:37563"/>
        <dbReference type="ChEBI" id="CHEBI:83071"/>
        <dbReference type="ChEBI" id="CHEBI:195187"/>
    </reaction>
    <physiologicalReaction direction="left-to-right" evidence="1">
        <dbReference type="Rhea" id="RHEA:76236"/>
    </physiologicalReaction>
</comment>
<comment type="cofactor">
    <cofactor evidence="1">
        <name>Mg(2+)</name>
        <dbReference type="ChEBI" id="CHEBI:18420"/>
    </cofactor>
    <text evidence="1">Magnesium is required for nucleotidyltransferase activity.</text>
</comment>
<comment type="cofactor">
    <cofactor evidence="1">
        <name>Ni(2+)</name>
        <dbReference type="ChEBI" id="CHEBI:49786"/>
    </cofactor>
    <text evidence="1">Nickel for phosphatase activity.</text>
</comment>
<comment type="subunit">
    <text evidence="1">Monomer. Can also form homodimers and oligomers.</text>
</comment>
<comment type="domain">
    <text evidence="1">Comprises two domains: an N-terminal domain containing the nucleotidyltransferase activity and a C-terminal HD domain associated with both phosphodiesterase and phosphatase activities.</text>
</comment>
<comment type="miscellaneous">
    <text evidence="1">A single active site specifically recognizes both ATP and CTP and is responsible for their addition.</text>
</comment>
<comment type="similarity">
    <text evidence="1">Belongs to the tRNA nucleotidyltransferase/poly(A) polymerase family. Bacterial CCA-adding enzyme type 1 subfamily.</text>
</comment>
<proteinExistence type="inferred from homology"/>
<name>CCA_HAEIG</name>
<reference key="1">
    <citation type="journal article" date="2007" name="Genome Biol.">
        <title>Characterization and modeling of the Haemophilus influenzae core and supragenomes based on the complete genomic sequences of Rd and 12 clinical nontypeable strains.</title>
        <authorList>
            <person name="Hogg J.S."/>
            <person name="Hu F.Z."/>
            <person name="Janto B."/>
            <person name="Boissy R."/>
            <person name="Hayes J."/>
            <person name="Keefe R."/>
            <person name="Post J.C."/>
            <person name="Ehrlich G.D."/>
        </authorList>
    </citation>
    <scope>NUCLEOTIDE SEQUENCE [LARGE SCALE GENOMIC DNA]</scope>
    <source>
        <strain>PittGG</strain>
    </source>
</reference>
<protein>
    <recommendedName>
        <fullName evidence="1">Multifunctional CCA protein</fullName>
    </recommendedName>
    <domain>
        <recommendedName>
            <fullName evidence="1">CCA-adding enzyme</fullName>
            <ecNumber evidence="1">2.7.7.72</ecNumber>
        </recommendedName>
        <alternativeName>
            <fullName evidence="1">CCA tRNA nucleotidyltransferase</fullName>
        </alternativeName>
        <alternativeName>
            <fullName evidence="1">tRNA CCA-pyrophosphorylase</fullName>
        </alternativeName>
        <alternativeName>
            <fullName evidence="1">tRNA adenylyl-/cytidylyl-transferase</fullName>
        </alternativeName>
        <alternativeName>
            <fullName evidence="1">tRNA nucleotidyltransferase</fullName>
        </alternativeName>
        <alternativeName>
            <fullName evidence="1">tRNA-NT</fullName>
        </alternativeName>
    </domain>
    <domain>
        <recommendedName>
            <fullName evidence="1">2'-nucleotidase</fullName>
            <ecNumber evidence="1">3.1.3.-</ecNumber>
        </recommendedName>
    </domain>
    <domain>
        <recommendedName>
            <fullName evidence="1">2',3'-cyclic phosphodiesterase</fullName>
            <ecNumber evidence="1">3.1.4.-</ecNumber>
        </recommendedName>
    </domain>
    <domain>
        <recommendedName>
            <fullName evidence="1">Phosphatase</fullName>
            <ecNumber evidence="1">3.1.3.-</ecNumber>
        </recommendedName>
    </domain>
</protein>
<sequence>MKIYLVGGAVRDQLLGLPVKDRDWIVVGADPATLLSLGYQQVGKDFPVFLNPKTKEEYALARTERKSSTGYTGFICDFSPTITLEQDLIRRDLTINAMAQSEDGEIIDPYGGKQDLENRILRHISPAFSEDPLRVLRVARFAARYHSLGFKIASETLALMAELAQSGELQHLTAERVWLETEKALNEKNPEIYFETLHKTGALSVLFSEIDALHGVPNPVKHHPEVDSFIHTMLVLKQAVNLTENNPILNKSAVRFAAICHDLGKALTPQNILPHHYGHEQAGIKPTRSLCKRLKVPSYFQELAELTCEFHTHIHKAFELRAETVITLFNRFDVWRKSQRFQEFLQVCLADTRGRTGFENKDYPQIDYINQLLHAANEVDVQQVIADGFEKQAIKNELTKRRILAVKQTKTNYPTN</sequence>
<keyword id="KW-0067">ATP-binding</keyword>
<keyword id="KW-0378">Hydrolase</keyword>
<keyword id="KW-0460">Magnesium</keyword>
<keyword id="KW-0479">Metal-binding</keyword>
<keyword id="KW-0511">Multifunctional enzyme</keyword>
<keyword id="KW-0533">Nickel</keyword>
<keyword id="KW-0547">Nucleotide-binding</keyword>
<keyword id="KW-0548">Nucleotidyltransferase</keyword>
<keyword id="KW-0692">RNA repair</keyword>
<keyword id="KW-0694">RNA-binding</keyword>
<keyword id="KW-0808">Transferase</keyword>
<keyword id="KW-0819">tRNA processing</keyword>
<accession>A5UJ23</accession>